<name>STKLK_ARATH</name>
<protein>
    <recommendedName>
        <fullName evidence="1">Probable transcription factor At4g00130</fullName>
    </recommendedName>
    <alternativeName>
        <fullName evidence="1">Storekeeper-like protein At4g00130</fullName>
    </alternativeName>
</protein>
<keyword id="KW-1185">Reference proteome</keyword>
<keyword id="KW-0804">Transcription</keyword>
<keyword id="KW-0805">Transcription regulation</keyword>
<comment type="similarity">
    <text evidence="1">Belongs to the GeBP family.</text>
</comment>
<comment type="sequence caution" evidence="1">
    <conflict type="erroneous gene model prediction">
        <sequence resource="EMBL-CDS" id="AAC19304"/>
    </conflict>
</comment>
<comment type="sequence caution" evidence="1">
    <conflict type="erroneous gene model prediction">
        <sequence resource="EMBL-CDS" id="CAB80771"/>
    </conflict>
</comment>
<comment type="online information" name="Plant Transcription Factor Database">
    <link uri="https://planttfdb.gao-lab.org/family.php?fam=GeBP#family_intro"/>
</comment>
<evidence type="ECO:0000305" key="1"/>
<evidence type="ECO:0000312" key="2">
    <source>
        <dbReference type="Araport" id="AT4G00130"/>
    </source>
</evidence>
<evidence type="ECO:0000312" key="3">
    <source>
        <dbReference type="EMBL" id="AAC19304.1"/>
    </source>
</evidence>
<evidence type="ECO:0000312" key="4">
    <source>
        <dbReference type="EMBL" id="ABE66036.1"/>
    </source>
</evidence>
<reference key="1">
    <citation type="journal article" date="1999" name="Nature">
        <title>Sequence and analysis of chromosome 4 of the plant Arabidopsis thaliana.</title>
        <authorList>
            <person name="Mayer K.F.X."/>
            <person name="Schueller C."/>
            <person name="Wambutt R."/>
            <person name="Murphy G."/>
            <person name="Volckaert G."/>
            <person name="Pohl T."/>
            <person name="Duesterhoeft A."/>
            <person name="Stiekema W."/>
            <person name="Entian K.-D."/>
            <person name="Terryn N."/>
            <person name="Harris B."/>
            <person name="Ansorge W."/>
            <person name="Brandt P."/>
            <person name="Grivell L.A."/>
            <person name="Rieger M."/>
            <person name="Weichselgartner M."/>
            <person name="de Simone V."/>
            <person name="Obermaier B."/>
            <person name="Mache R."/>
            <person name="Mueller M."/>
            <person name="Kreis M."/>
            <person name="Delseny M."/>
            <person name="Puigdomenech P."/>
            <person name="Watson M."/>
            <person name="Schmidtheini T."/>
            <person name="Reichert B."/>
            <person name="Portetelle D."/>
            <person name="Perez-Alonso M."/>
            <person name="Boutry M."/>
            <person name="Bancroft I."/>
            <person name="Vos P."/>
            <person name="Hoheisel J."/>
            <person name="Zimmermann W."/>
            <person name="Wedler H."/>
            <person name="Ridley P."/>
            <person name="Langham S.-A."/>
            <person name="McCullagh B."/>
            <person name="Bilham L."/>
            <person name="Robben J."/>
            <person name="van der Schueren J."/>
            <person name="Grymonprez B."/>
            <person name="Chuang Y.-J."/>
            <person name="Vandenbussche F."/>
            <person name="Braeken M."/>
            <person name="Weltjens I."/>
            <person name="Voet M."/>
            <person name="Bastiaens I."/>
            <person name="Aert R."/>
            <person name="Defoor E."/>
            <person name="Weitzenegger T."/>
            <person name="Bothe G."/>
            <person name="Ramsperger U."/>
            <person name="Hilbert H."/>
            <person name="Braun M."/>
            <person name="Holzer E."/>
            <person name="Brandt A."/>
            <person name="Peters S."/>
            <person name="van Staveren M."/>
            <person name="Dirkse W."/>
            <person name="Mooijman P."/>
            <person name="Klein Lankhorst R."/>
            <person name="Rose M."/>
            <person name="Hauf J."/>
            <person name="Koetter P."/>
            <person name="Berneiser S."/>
            <person name="Hempel S."/>
            <person name="Feldpausch M."/>
            <person name="Lamberth S."/>
            <person name="Van den Daele H."/>
            <person name="De Keyser A."/>
            <person name="Buysshaert C."/>
            <person name="Gielen J."/>
            <person name="Villarroel R."/>
            <person name="De Clercq R."/>
            <person name="van Montagu M."/>
            <person name="Rogers J."/>
            <person name="Cronin A."/>
            <person name="Quail M.A."/>
            <person name="Bray-Allen S."/>
            <person name="Clark L."/>
            <person name="Doggett J."/>
            <person name="Hall S."/>
            <person name="Kay M."/>
            <person name="Lennard N."/>
            <person name="McLay K."/>
            <person name="Mayes R."/>
            <person name="Pettett A."/>
            <person name="Rajandream M.A."/>
            <person name="Lyne M."/>
            <person name="Benes V."/>
            <person name="Rechmann S."/>
            <person name="Borkova D."/>
            <person name="Bloecker H."/>
            <person name="Scharfe M."/>
            <person name="Grimm M."/>
            <person name="Loehnert T.-H."/>
            <person name="Dose S."/>
            <person name="de Haan M."/>
            <person name="Maarse A.C."/>
            <person name="Schaefer M."/>
            <person name="Mueller-Auer S."/>
            <person name="Gabel C."/>
            <person name="Fuchs M."/>
            <person name="Fartmann B."/>
            <person name="Granderath K."/>
            <person name="Dauner D."/>
            <person name="Herzl A."/>
            <person name="Neumann S."/>
            <person name="Argiriou A."/>
            <person name="Vitale D."/>
            <person name="Liguori R."/>
            <person name="Piravandi E."/>
            <person name="Massenet O."/>
            <person name="Quigley F."/>
            <person name="Clabauld G."/>
            <person name="Muendlein A."/>
            <person name="Felber R."/>
            <person name="Schnabl S."/>
            <person name="Hiller R."/>
            <person name="Schmidt W."/>
            <person name="Lecharny A."/>
            <person name="Aubourg S."/>
            <person name="Chefdor F."/>
            <person name="Cooke R."/>
            <person name="Berger C."/>
            <person name="Monfort A."/>
            <person name="Casacuberta E."/>
            <person name="Gibbons T."/>
            <person name="Weber N."/>
            <person name="Vandenbol M."/>
            <person name="Bargues M."/>
            <person name="Terol J."/>
            <person name="Torres A."/>
            <person name="Perez-Perez A."/>
            <person name="Purnelle B."/>
            <person name="Bent E."/>
            <person name="Johnson S."/>
            <person name="Tacon D."/>
            <person name="Jesse T."/>
            <person name="Heijnen L."/>
            <person name="Schwarz S."/>
            <person name="Scholler P."/>
            <person name="Heber S."/>
            <person name="Francs P."/>
            <person name="Bielke C."/>
            <person name="Frishman D."/>
            <person name="Haase D."/>
            <person name="Lemcke K."/>
            <person name="Mewes H.-W."/>
            <person name="Stocker S."/>
            <person name="Zaccaria P."/>
            <person name="Bevan M."/>
            <person name="Wilson R.K."/>
            <person name="de la Bastide M."/>
            <person name="Habermann K."/>
            <person name="Parnell L."/>
            <person name="Dedhia N."/>
            <person name="Gnoj L."/>
            <person name="Schutz K."/>
            <person name="Huang E."/>
            <person name="Spiegel L."/>
            <person name="Sekhon M."/>
            <person name="Murray J."/>
            <person name="Sheet P."/>
            <person name="Cordes M."/>
            <person name="Abu-Threideh J."/>
            <person name="Stoneking T."/>
            <person name="Kalicki J."/>
            <person name="Graves T."/>
            <person name="Harmon G."/>
            <person name="Edwards J."/>
            <person name="Latreille P."/>
            <person name="Courtney L."/>
            <person name="Cloud J."/>
            <person name="Abbott A."/>
            <person name="Scott K."/>
            <person name="Johnson D."/>
            <person name="Minx P."/>
            <person name="Bentley D."/>
            <person name="Fulton B."/>
            <person name="Miller N."/>
            <person name="Greco T."/>
            <person name="Kemp K."/>
            <person name="Kramer J."/>
            <person name="Fulton L."/>
            <person name="Mardis E."/>
            <person name="Dante M."/>
            <person name="Pepin K."/>
            <person name="Hillier L.W."/>
            <person name="Nelson J."/>
            <person name="Spieth J."/>
            <person name="Ryan E."/>
            <person name="Andrews S."/>
            <person name="Geisel C."/>
            <person name="Layman D."/>
            <person name="Du H."/>
            <person name="Ali J."/>
            <person name="Berghoff A."/>
            <person name="Jones K."/>
            <person name="Drone K."/>
            <person name="Cotton M."/>
            <person name="Joshu C."/>
            <person name="Antonoiu B."/>
            <person name="Zidanic M."/>
            <person name="Strong C."/>
            <person name="Sun H."/>
            <person name="Lamar B."/>
            <person name="Yordan C."/>
            <person name="Ma P."/>
            <person name="Zhong J."/>
            <person name="Preston R."/>
            <person name="Vil D."/>
            <person name="Shekher M."/>
            <person name="Matero A."/>
            <person name="Shah R."/>
            <person name="Swaby I.K."/>
            <person name="O'Shaughnessy A."/>
            <person name="Rodriguez M."/>
            <person name="Hoffman J."/>
            <person name="Till S."/>
            <person name="Granat S."/>
            <person name="Shohdy N."/>
            <person name="Hasegawa A."/>
            <person name="Hameed A."/>
            <person name="Lodhi M."/>
            <person name="Johnson A."/>
            <person name="Chen E."/>
            <person name="Marra M.A."/>
            <person name="Martienssen R."/>
            <person name="McCombie W.R."/>
        </authorList>
    </citation>
    <scope>NUCLEOTIDE SEQUENCE [LARGE SCALE GENOMIC DNA]</scope>
    <source>
        <strain>cv. Columbia</strain>
    </source>
</reference>
<reference key="2">
    <citation type="journal article" date="2017" name="Plant J.">
        <title>Araport11: a complete reannotation of the Arabidopsis thaliana reference genome.</title>
        <authorList>
            <person name="Cheng C.Y."/>
            <person name="Krishnakumar V."/>
            <person name="Chan A.P."/>
            <person name="Thibaud-Nissen F."/>
            <person name="Schobel S."/>
            <person name="Town C.D."/>
        </authorList>
    </citation>
    <scope>GENOME REANNOTATION</scope>
    <source>
        <strain>cv. Columbia</strain>
    </source>
</reference>
<reference key="3">
    <citation type="journal article" date="2006" name="Plant Biotechnol. J.">
        <title>Simultaneous high-throughput recombinational cloning of open reading frames in closed and open configurations.</title>
        <authorList>
            <person name="Underwood B.A."/>
            <person name="Vanderhaeghen R."/>
            <person name="Whitford R."/>
            <person name="Town C.D."/>
            <person name="Hilson P."/>
        </authorList>
    </citation>
    <scope>NUCLEOTIDE SEQUENCE [LARGE SCALE GENOMIC DNA]</scope>
    <source>
        <strain>cv. Columbia</strain>
    </source>
</reference>
<gene>
    <name evidence="2" type="ordered locus">At4g00130</name>
    <name evidence="3" type="ORF">F6N15.6</name>
</gene>
<accession>Q1PED2</accession>
<accession>O81314</accession>
<dbReference type="EMBL" id="AF069299">
    <property type="protein sequence ID" value="AAC19304.1"/>
    <property type="status" value="ALT_SEQ"/>
    <property type="molecule type" value="Genomic_DNA"/>
</dbReference>
<dbReference type="EMBL" id="AL161471">
    <property type="protein sequence ID" value="CAB80771.1"/>
    <property type="status" value="ALT_SEQ"/>
    <property type="molecule type" value="Genomic_DNA"/>
</dbReference>
<dbReference type="EMBL" id="CP002687">
    <property type="protein sequence ID" value="AEE81827.1"/>
    <property type="molecule type" value="Genomic_DNA"/>
</dbReference>
<dbReference type="EMBL" id="DQ446786">
    <property type="protein sequence ID" value="ABE66036.1"/>
    <property type="molecule type" value="mRNA"/>
</dbReference>
<dbReference type="PIR" id="T01341">
    <property type="entry name" value="T01341"/>
</dbReference>
<dbReference type="RefSeq" id="NP_191924.2">
    <property type="nucleotide sequence ID" value="NM_116230.3"/>
</dbReference>
<dbReference type="IntAct" id="Q1PED2">
    <property type="interactions" value="4"/>
</dbReference>
<dbReference type="STRING" id="3702.Q1PED2"/>
<dbReference type="PaxDb" id="3702-AT4G00130.1"/>
<dbReference type="EnsemblPlants" id="AT4G00130.1">
    <property type="protein sequence ID" value="AT4G00130.1"/>
    <property type="gene ID" value="AT4G00130"/>
</dbReference>
<dbReference type="GeneID" id="825649"/>
<dbReference type="Gramene" id="AT4G00130.1">
    <property type="protein sequence ID" value="AT4G00130.1"/>
    <property type="gene ID" value="AT4G00130"/>
</dbReference>
<dbReference type="KEGG" id="ath:AT4G00130"/>
<dbReference type="Araport" id="AT4G00130"/>
<dbReference type="TAIR" id="AT4G00130"/>
<dbReference type="HOGENOM" id="CLU_1404209_0_0_1"/>
<dbReference type="InParanoid" id="Q1PED2"/>
<dbReference type="PhylomeDB" id="Q1PED2"/>
<dbReference type="PRO" id="PR:Q1PED2"/>
<dbReference type="Proteomes" id="UP000006548">
    <property type="component" value="Chromosome 4"/>
</dbReference>
<dbReference type="ExpressionAtlas" id="Q1PED2">
    <property type="expression patterns" value="baseline and differential"/>
</dbReference>
<dbReference type="GO" id="GO:0006355">
    <property type="term" value="P:regulation of DNA-templated transcription"/>
    <property type="evidence" value="ECO:0007669"/>
    <property type="project" value="InterPro"/>
</dbReference>
<dbReference type="InterPro" id="IPR007592">
    <property type="entry name" value="GEBP"/>
</dbReference>
<dbReference type="InterPro" id="IPR053932">
    <property type="entry name" value="GeBP-like_DBD"/>
</dbReference>
<dbReference type="PANTHER" id="PTHR31662">
    <property type="entry name" value="BNAANNG10740D PROTEIN-RELATED"/>
    <property type="match status" value="1"/>
</dbReference>
<dbReference type="PANTHER" id="PTHR31662:SF51">
    <property type="entry name" value="GLABROUS1 ENHANCER-BINDING PROTEIN-LIKE"/>
    <property type="match status" value="1"/>
</dbReference>
<dbReference type="Pfam" id="PF04504">
    <property type="entry name" value="GeBP-like_DBD"/>
    <property type="match status" value="1"/>
</dbReference>
<proteinExistence type="evidence at transcript level"/>
<organism evidence="4">
    <name type="scientific">Arabidopsis thaliana</name>
    <name type="common">Mouse-ear cress</name>
    <dbReference type="NCBI Taxonomy" id="3702"/>
    <lineage>
        <taxon>Eukaryota</taxon>
        <taxon>Viridiplantae</taxon>
        <taxon>Streptophyta</taxon>
        <taxon>Embryophyta</taxon>
        <taxon>Tracheophyta</taxon>
        <taxon>Spermatophyta</taxon>
        <taxon>Magnoliopsida</taxon>
        <taxon>eudicotyledons</taxon>
        <taxon>Gunneridae</taxon>
        <taxon>Pentapetalae</taxon>
        <taxon>rosids</taxon>
        <taxon>malvids</taxon>
        <taxon>Brassicales</taxon>
        <taxon>Brassicaceae</taxon>
        <taxon>Camelineae</taxon>
        <taxon>Arabidopsis</taxon>
    </lineage>
</organism>
<sequence>MMRLRRLLERMLRRCCFRDCSVRLTKSLCFKKLIEFDATKNQIVTKLQRLKKKFNNAVKNARKKGQTEDEVEYAKESEKKRFDLSIMIWGSNGVLVAGKSSKKKVAPKEMKPEETDAKVVNEGLSIGREMVPFGSSCGLDESKLTTGWENVEDGAEKREVEEKWKKFKDKLFELLYERSVLMNKTEAMMFKAES</sequence>
<feature type="chain" id="PRO_0000436985" description="Probable transcription factor At4g00130">
    <location>
        <begin position="1"/>
        <end position="194"/>
    </location>
</feature>